<organism>
    <name type="scientific">Listeria monocytogenes serotype 4b (strain F2365)</name>
    <dbReference type="NCBI Taxonomy" id="265669"/>
    <lineage>
        <taxon>Bacteria</taxon>
        <taxon>Bacillati</taxon>
        <taxon>Bacillota</taxon>
        <taxon>Bacilli</taxon>
        <taxon>Bacillales</taxon>
        <taxon>Listeriaceae</taxon>
        <taxon>Listeria</taxon>
    </lineage>
</organism>
<evidence type="ECO:0000255" key="1">
    <source>
        <dbReference type="HAMAP-Rule" id="MF_00260"/>
    </source>
</evidence>
<gene>
    <name evidence="1" type="primary">hemC</name>
    <name type="ordered locus">LMOf2365_1577</name>
</gene>
<dbReference type="EC" id="2.5.1.61" evidence="1"/>
<dbReference type="EMBL" id="AE017262">
    <property type="protein sequence ID" value="AAT04352.1"/>
    <property type="molecule type" value="Genomic_DNA"/>
</dbReference>
<dbReference type="RefSeq" id="WP_003725683.1">
    <property type="nucleotide sequence ID" value="NC_002973.6"/>
</dbReference>
<dbReference type="SMR" id="Q71ZB2"/>
<dbReference type="KEGG" id="lmf:LMOf2365_1577"/>
<dbReference type="HOGENOM" id="CLU_019704_0_2_9"/>
<dbReference type="UniPathway" id="UPA00251">
    <property type="reaction ID" value="UER00319"/>
</dbReference>
<dbReference type="GO" id="GO:0005737">
    <property type="term" value="C:cytoplasm"/>
    <property type="evidence" value="ECO:0007669"/>
    <property type="project" value="TreeGrafter"/>
</dbReference>
<dbReference type="GO" id="GO:0004418">
    <property type="term" value="F:hydroxymethylbilane synthase activity"/>
    <property type="evidence" value="ECO:0007669"/>
    <property type="project" value="UniProtKB-UniRule"/>
</dbReference>
<dbReference type="GO" id="GO:0006782">
    <property type="term" value="P:protoporphyrinogen IX biosynthetic process"/>
    <property type="evidence" value="ECO:0007669"/>
    <property type="project" value="UniProtKB-UniRule"/>
</dbReference>
<dbReference type="CDD" id="cd13646">
    <property type="entry name" value="PBP2_EcHMBS_like"/>
    <property type="match status" value="1"/>
</dbReference>
<dbReference type="FunFam" id="3.30.160.40:FF:000001">
    <property type="entry name" value="Porphobilinogen deaminase"/>
    <property type="match status" value="1"/>
</dbReference>
<dbReference type="FunFam" id="3.40.190.10:FF:000004">
    <property type="entry name" value="Porphobilinogen deaminase"/>
    <property type="match status" value="1"/>
</dbReference>
<dbReference type="FunFam" id="3.40.190.10:FF:000005">
    <property type="entry name" value="Porphobilinogen deaminase"/>
    <property type="match status" value="1"/>
</dbReference>
<dbReference type="Gene3D" id="3.40.190.10">
    <property type="entry name" value="Periplasmic binding protein-like II"/>
    <property type="match status" value="2"/>
</dbReference>
<dbReference type="Gene3D" id="3.30.160.40">
    <property type="entry name" value="Porphobilinogen deaminase, C-terminal domain"/>
    <property type="match status" value="1"/>
</dbReference>
<dbReference type="HAMAP" id="MF_00260">
    <property type="entry name" value="Porphobil_deam"/>
    <property type="match status" value="1"/>
</dbReference>
<dbReference type="InterPro" id="IPR000860">
    <property type="entry name" value="HemC"/>
</dbReference>
<dbReference type="InterPro" id="IPR022419">
    <property type="entry name" value="Porphobilin_deaminase_cofac_BS"/>
</dbReference>
<dbReference type="InterPro" id="IPR022417">
    <property type="entry name" value="Porphobilin_deaminase_N"/>
</dbReference>
<dbReference type="InterPro" id="IPR022418">
    <property type="entry name" value="Porphobilinogen_deaminase_C"/>
</dbReference>
<dbReference type="InterPro" id="IPR036803">
    <property type="entry name" value="Porphobilinogen_deaminase_C_sf"/>
</dbReference>
<dbReference type="NCBIfam" id="TIGR00212">
    <property type="entry name" value="hemC"/>
    <property type="match status" value="1"/>
</dbReference>
<dbReference type="PANTHER" id="PTHR11557">
    <property type="entry name" value="PORPHOBILINOGEN DEAMINASE"/>
    <property type="match status" value="1"/>
</dbReference>
<dbReference type="PANTHER" id="PTHR11557:SF0">
    <property type="entry name" value="PORPHOBILINOGEN DEAMINASE"/>
    <property type="match status" value="1"/>
</dbReference>
<dbReference type="Pfam" id="PF01379">
    <property type="entry name" value="Porphobil_deam"/>
    <property type="match status" value="1"/>
</dbReference>
<dbReference type="Pfam" id="PF03900">
    <property type="entry name" value="Porphobil_deamC"/>
    <property type="match status" value="1"/>
</dbReference>
<dbReference type="PIRSF" id="PIRSF001438">
    <property type="entry name" value="4pyrrol_synth_OHMeBilane_synth"/>
    <property type="match status" value="1"/>
</dbReference>
<dbReference type="PRINTS" id="PR00151">
    <property type="entry name" value="PORPHBDMNASE"/>
</dbReference>
<dbReference type="SUPFAM" id="SSF53850">
    <property type="entry name" value="Periplasmic binding protein-like II"/>
    <property type="match status" value="1"/>
</dbReference>
<dbReference type="SUPFAM" id="SSF54782">
    <property type="entry name" value="Porphobilinogen deaminase (hydroxymethylbilane synthase), C-terminal domain"/>
    <property type="match status" value="1"/>
</dbReference>
<dbReference type="PROSITE" id="PS00533">
    <property type="entry name" value="PORPHOBILINOGEN_DEAM"/>
    <property type="match status" value="1"/>
</dbReference>
<comment type="function">
    <text evidence="1">Tetrapolymerization of the monopyrrole PBG into the hydroxymethylbilane pre-uroporphyrinogen in several discrete steps.</text>
</comment>
<comment type="catalytic activity">
    <reaction evidence="1">
        <text>4 porphobilinogen + H2O = hydroxymethylbilane + 4 NH4(+)</text>
        <dbReference type="Rhea" id="RHEA:13185"/>
        <dbReference type="ChEBI" id="CHEBI:15377"/>
        <dbReference type="ChEBI" id="CHEBI:28938"/>
        <dbReference type="ChEBI" id="CHEBI:57845"/>
        <dbReference type="ChEBI" id="CHEBI:58126"/>
        <dbReference type="EC" id="2.5.1.61"/>
    </reaction>
</comment>
<comment type="cofactor">
    <cofactor evidence="1">
        <name>dipyrromethane</name>
        <dbReference type="ChEBI" id="CHEBI:60342"/>
    </cofactor>
    <text evidence="1">Binds 1 dipyrromethane group covalently.</text>
</comment>
<comment type="pathway">
    <text evidence="1">Porphyrin-containing compound metabolism; protoporphyrin-IX biosynthesis; coproporphyrinogen-III from 5-aminolevulinate: step 2/4.</text>
</comment>
<comment type="subunit">
    <text evidence="1">Monomer.</text>
</comment>
<comment type="miscellaneous">
    <text evidence="1">The porphobilinogen subunits are added to the dipyrromethane group.</text>
</comment>
<comment type="similarity">
    <text evidence="1">Belongs to the HMBS family.</text>
</comment>
<feature type="chain" id="PRO_0000142953" description="Porphobilinogen deaminase">
    <location>
        <begin position="1"/>
        <end position="309"/>
    </location>
</feature>
<feature type="modified residue" description="S-(dipyrrolylmethanemethyl)cysteine" evidence="1">
    <location>
        <position position="244"/>
    </location>
</feature>
<keyword id="KW-0627">Porphyrin biosynthesis</keyword>
<keyword id="KW-0808">Transferase</keyword>
<name>HEM3_LISMF</name>
<sequence>MKRKIIVGSRRSKLALTQSNWVINKLKENYPEFDFEIKEIVTKGDRILDVTLSKVGGKGLFVSEVEQALSDEVIDFAVHSMKDVPSSLKEGLIIGAIPKRESPLDCFVFNRVNSLDELPQGSVIGTSSLRRAAQLLKHRPDFVIKPIRGNIDTRLQKLHAENFDAIILAKAGLARMGWLENTTLKLEDIPPELCLPAVGQGALAIECRESDQQIRDMLTSIHHEETGICVEAERVFLKKLNGGCEIPIAGFATRANEVVHFKGLVGNADGSIILASEQAGANPSEIGNKVAEDLLSEGADTIIKELRNI</sequence>
<protein>
    <recommendedName>
        <fullName evidence="1">Porphobilinogen deaminase</fullName>
        <shortName evidence="1">PBG</shortName>
        <ecNumber evidence="1">2.5.1.61</ecNumber>
    </recommendedName>
    <alternativeName>
        <fullName evidence="1">Hydroxymethylbilane synthase</fullName>
        <shortName evidence="1">HMBS</shortName>
    </alternativeName>
    <alternativeName>
        <fullName evidence="1">Pre-uroporphyrinogen synthase</fullName>
    </alternativeName>
</protein>
<proteinExistence type="inferred from homology"/>
<accession>Q71ZB2</accession>
<reference key="1">
    <citation type="journal article" date="2004" name="Nucleic Acids Res.">
        <title>Whole genome comparisons of serotype 4b and 1/2a strains of the food-borne pathogen Listeria monocytogenes reveal new insights into the core genome components of this species.</title>
        <authorList>
            <person name="Nelson K.E."/>
            <person name="Fouts D.E."/>
            <person name="Mongodin E.F."/>
            <person name="Ravel J."/>
            <person name="DeBoy R.T."/>
            <person name="Kolonay J.F."/>
            <person name="Rasko D.A."/>
            <person name="Angiuoli S.V."/>
            <person name="Gill S.R."/>
            <person name="Paulsen I.T."/>
            <person name="Peterson J.D."/>
            <person name="White O."/>
            <person name="Nelson W.C."/>
            <person name="Nierman W.C."/>
            <person name="Beanan M.J."/>
            <person name="Brinkac L.M."/>
            <person name="Daugherty S.C."/>
            <person name="Dodson R.J."/>
            <person name="Durkin A.S."/>
            <person name="Madupu R."/>
            <person name="Haft D.H."/>
            <person name="Selengut J."/>
            <person name="Van Aken S.E."/>
            <person name="Khouri H.M."/>
            <person name="Fedorova N."/>
            <person name="Forberger H.A."/>
            <person name="Tran B."/>
            <person name="Kathariou S."/>
            <person name="Wonderling L.D."/>
            <person name="Uhlich G.A."/>
            <person name="Bayles D.O."/>
            <person name="Luchansky J.B."/>
            <person name="Fraser C.M."/>
        </authorList>
    </citation>
    <scope>NUCLEOTIDE SEQUENCE [LARGE SCALE GENOMIC DNA]</scope>
    <source>
        <strain>F2365</strain>
    </source>
</reference>